<organism>
    <name type="scientific">Staphylococcus aureus (strain Mu3 / ATCC 700698)</name>
    <dbReference type="NCBI Taxonomy" id="418127"/>
    <lineage>
        <taxon>Bacteria</taxon>
        <taxon>Bacillati</taxon>
        <taxon>Bacillota</taxon>
        <taxon>Bacilli</taxon>
        <taxon>Bacillales</taxon>
        <taxon>Staphylococcaceae</taxon>
        <taxon>Staphylococcus</taxon>
    </lineage>
</organism>
<gene>
    <name evidence="1" type="primary">aroB</name>
    <name type="ordered locus">SAHV_1453</name>
</gene>
<dbReference type="EC" id="4.2.3.4" evidence="1"/>
<dbReference type="EMBL" id="AP009324">
    <property type="protein sequence ID" value="BAF78336.1"/>
    <property type="molecule type" value="Genomic_DNA"/>
</dbReference>
<dbReference type="RefSeq" id="WP_000776312.1">
    <property type="nucleotide sequence ID" value="NC_009782.1"/>
</dbReference>
<dbReference type="SMR" id="A7X2G6"/>
<dbReference type="KEGG" id="saw:SAHV_1453"/>
<dbReference type="HOGENOM" id="CLU_001201_0_1_9"/>
<dbReference type="UniPathway" id="UPA00053">
    <property type="reaction ID" value="UER00085"/>
</dbReference>
<dbReference type="GO" id="GO:0005737">
    <property type="term" value="C:cytoplasm"/>
    <property type="evidence" value="ECO:0007669"/>
    <property type="project" value="UniProtKB-SubCell"/>
</dbReference>
<dbReference type="GO" id="GO:0003856">
    <property type="term" value="F:3-dehydroquinate synthase activity"/>
    <property type="evidence" value="ECO:0007669"/>
    <property type="project" value="UniProtKB-UniRule"/>
</dbReference>
<dbReference type="GO" id="GO:0046872">
    <property type="term" value="F:metal ion binding"/>
    <property type="evidence" value="ECO:0007669"/>
    <property type="project" value="UniProtKB-KW"/>
</dbReference>
<dbReference type="GO" id="GO:0000166">
    <property type="term" value="F:nucleotide binding"/>
    <property type="evidence" value="ECO:0007669"/>
    <property type="project" value="UniProtKB-KW"/>
</dbReference>
<dbReference type="GO" id="GO:0008652">
    <property type="term" value="P:amino acid biosynthetic process"/>
    <property type="evidence" value="ECO:0007669"/>
    <property type="project" value="UniProtKB-KW"/>
</dbReference>
<dbReference type="GO" id="GO:0009073">
    <property type="term" value="P:aromatic amino acid family biosynthetic process"/>
    <property type="evidence" value="ECO:0007669"/>
    <property type="project" value="UniProtKB-KW"/>
</dbReference>
<dbReference type="GO" id="GO:0009423">
    <property type="term" value="P:chorismate biosynthetic process"/>
    <property type="evidence" value="ECO:0007669"/>
    <property type="project" value="UniProtKB-UniRule"/>
</dbReference>
<dbReference type="FunFam" id="3.40.50.1970:FF:000019">
    <property type="entry name" value="3-dehydroquinate synthase"/>
    <property type="match status" value="1"/>
</dbReference>
<dbReference type="Gene3D" id="3.40.50.1970">
    <property type="match status" value="1"/>
</dbReference>
<dbReference type="Gene3D" id="1.20.1090.10">
    <property type="entry name" value="Dehydroquinate synthase-like - alpha domain"/>
    <property type="match status" value="1"/>
</dbReference>
<dbReference type="HAMAP" id="MF_00110">
    <property type="entry name" value="DHQ_synthase"/>
    <property type="match status" value="1"/>
</dbReference>
<dbReference type="InterPro" id="IPR050071">
    <property type="entry name" value="Dehydroquinate_synthase"/>
</dbReference>
<dbReference type="InterPro" id="IPR016037">
    <property type="entry name" value="DHQ_synth_AroB"/>
</dbReference>
<dbReference type="InterPro" id="IPR030963">
    <property type="entry name" value="DHQ_synth_fam"/>
</dbReference>
<dbReference type="InterPro" id="IPR030960">
    <property type="entry name" value="DHQS/DOIS_N"/>
</dbReference>
<dbReference type="InterPro" id="IPR056179">
    <property type="entry name" value="DHQS_C"/>
</dbReference>
<dbReference type="NCBIfam" id="TIGR01357">
    <property type="entry name" value="aroB"/>
    <property type="match status" value="1"/>
</dbReference>
<dbReference type="PANTHER" id="PTHR43622">
    <property type="entry name" value="3-DEHYDROQUINATE SYNTHASE"/>
    <property type="match status" value="1"/>
</dbReference>
<dbReference type="PANTHER" id="PTHR43622:SF7">
    <property type="entry name" value="3-DEHYDROQUINATE SYNTHASE, CHLOROPLASTIC"/>
    <property type="match status" value="1"/>
</dbReference>
<dbReference type="Pfam" id="PF01761">
    <property type="entry name" value="DHQ_synthase"/>
    <property type="match status" value="1"/>
</dbReference>
<dbReference type="Pfam" id="PF24621">
    <property type="entry name" value="DHQS_C"/>
    <property type="match status" value="1"/>
</dbReference>
<dbReference type="PIRSF" id="PIRSF001455">
    <property type="entry name" value="DHQ_synth"/>
    <property type="match status" value="1"/>
</dbReference>
<dbReference type="SUPFAM" id="SSF56796">
    <property type="entry name" value="Dehydroquinate synthase-like"/>
    <property type="match status" value="1"/>
</dbReference>
<accession>A7X2G6</accession>
<feature type="chain" id="PRO_1000094626" description="3-dehydroquinate synthase">
    <location>
        <begin position="1"/>
        <end position="354"/>
    </location>
</feature>
<feature type="binding site" evidence="1">
    <location>
        <begin position="100"/>
        <end position="104"/>
    </location>
    <ligand>
        <name>NAD(+)</name>
        <dbReference type="ChEBI" id="CHEBI:57540"/>
    </ligand>
</feature>
<feature type="binding site" evidence="1">
    <location>
        <begin position="124"/>
        <end position="125"/>
    </location>
    <ligand>
        <name>NAD(+)</name>
        <dbReference type="ChEBI" id="CHEBI:57540"/>
    </ligand>
</feature>
<feature type="binding site" evidence="1">
    <location>
        <position position="136"/>
    </location>
    <ligand>
        <name>NAD(+)</name>
        <dbReference type="ChEBI" id="CHEBI:57540"/>
    </ligand>
</feature>
<feature type="binding site" evidence="1">
    <location>
        <position position="145"/>
    </location>
    <ligand>
        <name>NAD(+)</name>
        <dbReference type="ChEBI" id="CHEBI:57540"/>
    </ligand>
</feature>
<feature type="binding site" evidence="1">
    <location>
        <begin position="163"/>
        <end position="166"/>
    </location>
    <ligand>
        <name>NAD(+)</name>
        <dbReference type="ChEBI" id="CHEBI:57540"/>
    </ligand>
</feature>
<feature type="binding site" evidence="1">
    <location>
        <position position="178"/>
    </location>
    <ligand>
        <name>Zn(2+)</name>
        <dbReference type="ChEBI" id="CHEBI:29105"/>
    </ligand>
</feature>
<feature type="binding site" evidence="1">
    <location>
        <position position="242"/>
    </location>
    <ligand>
        <name>Zn(2+)</name>
        <dbReference type="ChEBI" id="CHEBI:29105"/>
    </ligand>
</feature>
<feature type="binding site" evidence="1">
    <location>
        <position position="256"/>
    </location>
    <ligand>
        <name>Zn(2+)</name>
        <dbReference type="ChEBI" id="CHEBI:29105"/>
    </ligand>
</feature>
<proteinExistence type="inferred from homology"/>
<name>AROB_STAA1</name>
<comment type="function">
    <text evidence="1">Catalyzes the conversion of 3-deoxy-D-arabino-heptulosonate 7-phosphate (DAHP) to dehydroquinate (DHQ).</text>
</comment>
<comment type="catalytic activity">
    <reaction evidence="1">
        <text>7-phospho-2-dehydro-3-deoxy-D-arabino-heptonate = 3-dehydroquinate + phosphate</text>
        <dbReference type="Rhea" id="RHEA:21968"/>
        <dbReference type="ChEBI" id="CHEBI:32364"/>
        <dbReference type="ChEBI" id="CHEBI:43474"/>
        <dbReference type="ChEBI" id="CHEBI:58394"/>
        <dbReference type="EC" id="4.2.3.4"/>
    </reaction>
</comment>
<comment type="cofactor">
    <cofactor evidence="1">
        <name>Co(2+)</name>
        <dbReference type="ChEBI" id="CHEBI:48828"/>
    </cofactor>
    <cofactor evidence="1">
        <name>Zn(2+)</name>
        <dbReference type="ChEBI" id="CHEBI:29105"/>
    </cofactor>
    <text evidence="1">Binds 1 divalent metal cation per subunit. Can use either Co(2+) or Zn(2+).</text>
</comment>
<comment type="cofactor">
    <cofactor evidence="1">
        <name>NAD(+)</name>
        <dbReference type="ChEBI" id="CHEBI:57540"/>
    </cofactor>
</comment>
<comment type="pathway">
    <text evidence="1">Metabolic intermediate biosynthesis; chorismate biosynthesis; chorismate from D-erythrose 4-phosphate and phosphoenolpyruvate: step 2/7.</text>
</comment>
<comment type="subcellular location">
    <subcellularLocation>
        <location evidence="1">Cytoplasm</location>
    </subcellularLocation>
</comment>
<comment type="similarity">
    <text evidence="1">Belongs to the sugar phosphate cyclases superfamily. Dehydroquinate synthase family.</text>
</comment>
<reference key="1">
    <citation type="journal article" date="2008" name="Antimicrob. Agents Chemother.">
        <title>Mutated response regulator graR is responsible for phenotypic conversion of Staphylococcus aureus from heterogeneous vancomycin-intermediate resistance to vancomycin-intermediate resistance.</title>
        <authorList>
            <person name="Neoh H.-M."/>
            <person name="Cui L."/>
            <person name="Yuzawa H."/>
            <person name="Takeuchi F."/>
            <person name="Matsuo M."/>
            <person name="Hiramatsu K."/>
        </authorList>
    </citation>
    <scope>NUCLEOTIDE SEQUENCE [LARGE SCALE GENOMIC DNA]</scope>
    <source>
        <strain>Mu3 / ATCC 700698</strain>
    </source>
</reference>
<evidence type="ECO:0000255" key="1">
    <source>
        <dbReference type="HAMAP-Rule" id="MF_00110"/>
    </source>
</evidence>
<sequence length="354" mass="40237">MKLQTTYPSNNYPIFVEHGAIDHISTYIDQFDQSFILIDEHVNQYFADKFDDILSYENVHKVIIPAGEKTKTFEQYQETLEYILSHHVTRNTAIIAVGGGATGDFAGFVAATLLRGVHFIQVPTTILAHDSSVGGKVGINSKQGKNLIGAFYRPTAVIYDLDFLKTLPFEQILSGYAEVYKHALLNGESTTQEIEQHFKDREILQSLNGMDKYIAKGIETKLDIVVADEKEQGVRKFLNLGHTFGHAVEYNHKIAHGHAVMIGIIYQFIVANILFNSNHDIQHYINYLTKLGYPLETITDIDFETIYQYMLSDKKNDKQGVQMVLIKHFGDIVVQHIDQTTLQHACEQLKTYFK</sequence>
<keyword id="KW-0028">Amino-acid biosynthesis</keyword>
<keyword id="KW-0057">Aromatic amino acid biosynthesis</keyword>
<keyword id="KW-0170">Cobalt</keyword>
<keyword id="KW-0963">Cytoplasm</keyword>
<keyword id="KW-0456">Lyase</keyword>
<keyword id="KW-0479">Metal-binding</keyword>
<keyword id="KW-0520">NAD</keyword>
<keyword id="KW-0547">Nucleotide-binding</keyword>
<keyword id="KW-0862">Zinc</keyword>
<protein>
    <recommendedName>
        <fullName evidence="1">3-dehydroquinate synthase</fullName>
        <shortName evidence="1">DHQS</shortName>
        <ecNumber evidence="1">4.2.3.4</ecNumber>
    </recommendedName>
</protein>